<keyword id="KW-0963">Cytoplasm</keyword>
<keyword id="KW-0238">DNA-binding</keyword>
<keyword id="KW-0479">Metal-binding</keyword>
<keyword id="KW-0539">Nucleus</keyword>
<keyword id="KW-0597">Phosphoprotein</keyword>
<keyword id="KW-1185">Reference proteome</keyword>
<keyword id="KW-0677">Repeat</keyword>
<keyword id="KW-0804">Transcription</keyword>
<keyword id="KW-0805">Transcription regulation</keyword>
<keyword id="KW-0862">Zinc</keyword>
<keyword id="KW-0863">Zinc-finger</keyword>
<evidence type="ECO:0000255" key="1">
    <source>
        <dbReference type="PROSITE-ProRule" id="PRU00042"/>
    </source>
</evidence>
<evidence type="ECO:0000256" key="2">
    <source>
        <dbReference type="SAM" id="MobiDB-lite"/>
    </source>
</evidence>
<evidence type="ECO:0000269" key="3">
    <source>
    </source>
</evidence>
<evidence type="ECO:0000269" key="4">
    <source>
    </source>
</evidence>
<evidence type="ECO:0000269" key="5">
    <source>
    </source>
</evidence>
<evidence type="ECO:0000305" key="6"/>
<name>MIG3_YEAST</name>
<protein>
    <recommendedName>
        <fullName>Transcription corepressor MIG3</fullName>
    </recommendedName>
    <alternativeName>
        <fullName>Multicopy inhibitor of growth protein 3</fullName>
    </alternativeName>
</protein>
<accession>P39943</accession>
<accession>D3DLS7</accession>
<gene>
    <name type="primary">MIG3</name>
    <name type="ordered locus">YER028C</name>
</gene>
<reference key="1">
    <citation type="journal article" date="1997" name="Nature">
        <title>The nucleotide sequence of Saccharomyces cerevisiae chromosome V.</title>
        <authorList>
            <person name="Dietrich F.S."/>
            <person name="Mulligan J.T."/>
            <person name="Hennessy K.M."/>
            <person name="Yelton M.A."/>
            <person name="Allen E."/>
            <person name="Araujo R."/>
            <person name="Aviles E."/>
            <person name="Berno A."/>
            <person name="Brennan T."/>
            <person name="Carpenter J."/>
            <person name="Chen E."/>
            <person name="Cherry J.M."/>
            <person name="Chung E."/>
            <person name="Duncan M."/>
            <person name="Guzman E."/>
            <person name="Hartzell G."/>
            <person name="Hunicke-Smith S."/>
            <person name="Hyman R.W."/>
            <person name="Kayser A."/>
            <person name="Komp C."/>
            <person name="Lashkari D."/>
            <person name="Lew H."/>
            <person name="Lin D."/>
            <person name="Mosedale D."/>
            <person name="Nakahara K."/>
            <person name="Namath A."/>
            <person name="Norgren R."/>
            <person name="Oefner P."/>
            <person name="Oh C."/>
            <person name="Petel F.X."/>
            <person name="Roberts D."/>
            <person name="Sehl P."/>
            <person name="Schramm S."/>
            <person name="Shogren T."/>
            <person name="Smith V."/>
            <person name="Taylor P."/>
            <person name="Wei Y."/>
            <person name="Botstein D."/>
            <person name="Davis R.W."/>
        </authorList>
    </citation>
    <scope>NUCLEOTIDE SEQUENCE [LARGE SCALE GENOMIC DNA]</scope>
    <source>
        <strain>ATCC 204508 / S288c</strain>
    </source>
</reference>
<reference key="2">
    <citation type="journal article" date="2014" name="G3 (Bethesda)">
        <title>The reference genome sequence of Saccharomyces cerevisiae: Then and now.</title>
        <authorList>
            <person name="Engel S.R."/>
            <person name="Dietrich F.S."/>
            <person name="Fisk D.G."/>
            <person name="Binkley G."/>
            <person name="Balakrishnan R."/>
            <person name="Costanzo M.C."/>
            <person name="Dwight S.S."/>
            <person name="Hitz B.C."/>
            <person name="Karra K."/>
            <person name="Nash R.S."/>
            <person name="Weng S."/>
            <person name="Wong E.D."/>
            <person name="Lloyd P."/>
            <person name="Skrzypek M.S."/>
            <person name="Miyasato S.R."/>
            <person name="Simison M."/>
            <person name="Cherry J.M."/>
        </authorList>
    </citation>
    <scope>GENOME REANNOTATION</scope>
    <source>
        <strain>ATCC 204508 / S288c</strain>
    </source>
</reference>
<reference key="3">
    <citation type="journal article" date="2002" name="Cell Calcium">
        <title>Genome-wide analysis of yeast transcription upon calcium shortage.</title>
        <authorList>
            <person name="Lombardia L.J."/>
            <person name="Becerra M."/>
            <person name="Rodriguez-Belmonte E."/>
            <person name="Hauser N.C."/>
            <person name="Cerdan M.E."/>
        </authorList>
    </citation>
    <scope>INDUCTION</scope>
</reference>
<reference key="4">
    <citation type="journal article" date="2003" name="Nature">
        <title>Global analysis of protein localization in budding yeast.</title>
        <authorList>
            <person name="Huh W.-K."/>
            <person name="Falvo J.V."/>
            <person name="Gerke L.C."/>
            <person name="Carroll A.S."/>
            <person name="Howson R.W."/>
            <person name="Weissman J.S."/>
            <person name="O'Shea E.K."/>
        </authorList>
    </citation>
    <scope>SUBCELLULAR LOCATION [LARGE SCALE ANALYSIS]</scope>
</reference>
<reference key="5">
    <citation type="journal article" date="2004" name="Mol. Cell. Biol.">
        <title>The protein kinase Snf1 is required for tolerance to the ribonucleotide reductase inhibitor hydroxyurea.</title>
        <authorList>
            <person name="Dubacq C."/>
            <person name="Chevalier A."/>
            <person name="Mann C."/>
        </authorList>
    </citation>
    <scope>FUNCTION</scope>
    <scope>PHOSPHORYLATION</scope>
</reference>
<organism>
    <name type="scientific">Saccharomyces cerevisiae (strain ATCC 204508 / S288c)</name>
    <name type="common">Baker's yeast</name>
    <dbReference type="NCBI Taxonomy" id="559292"/>
    <lineage>
        <taxon>Eukaryota</taxon>
        <taxon>Fungi</taxon>
        <taxon>Dikarya</taxon>
        <taxon>Ascomycota</taxon>
        <taxon>Saccharomycotina</taxon>
        <taxon>Saccharomycetes</taxon>
        <taxon>Saccharomycetales</taxon>
        <taxon>Saccharomycetaceae</taxon>
        <taxon>Saccharomyces</taxon>
    </lineage>
</organism>
<feature type="chain" id="PRO_0000046886" description="Transcription corepressor MIG3">
    <location>
        <begin position="1"/>
        <end position="394"/>
    </location>
</feature>
<feature type="zinc finger region" description="C2H2-type 1" evidence="1">
    <location>
        <begin position="17"/>
        <end position="39"/>
    </location>
</feature>
<feature type="zinc finger region" description="C2H2-type 2" evidence="1">
    <location>
        <begin position="45"/>
        <end position="69"/>
    </location>
</feature>
<feature type="region of interest" description="Disordered" evidence="2">
    <location>
        <begin position="33"/>
        <end position="52"/>
    </location>
</feature>
<feature type="region of interest" description="Disordered" evidence="2">
    <location>
        <begin position="229"/>
        <end position="268"/>
    </location>
</feature>
<feature type="region of interest" description="Disordered" evidence="2">
    <location>
        <begin position="345"/>
        <end position="375"/>
    </location>
</feature>
<feature type="compositionally biased region" description="Low complexity" evidence="2">
    <location>
        <begin position="234"/>
        <end position="248"/>
    </location>
</feature>
<feature type="compositionally biased region" description="Polar residues" evidence="2">
    <location>
        <begin position="249"/>
        <end position="259"/>
    </location>
</feature>
<proteinExistence type="evidence at protein level"/>
<sequence>MNYLRDRFPPDNDQRPFRCEICSRGFHRLEHKKRHGRTHTGEKPHKCTVQGCPKSFSRSDELKRHLRTHTKGVQRRRIKSKGSRKTVVNTATAAPTTFNENTGVSLTGIGQSKVPPILISVAQNCDDVNIRNTGNNNGIVETQAPAILVPVINIPNDPHPIPSSLSTTSITSIASVYPSTSPFQYLKSGFPEDPASTPYVHSSGSSLALGELSSNSSIFSKSRRNLAAMSGPDSLSSSKNQSSASLLSQTSHPSKSFSRPPTDLSPLRRIMPSVNTGDMEISRTVSVSSSSSSLTSVTYDDTAAKDMGMGIFFDRPPVTQKACRSNHKYKVNAVSRGRQHERAQFHISGDDEDSNVHRQESRASNTSPNVSLPPIKSILRQIDNFNSAPSYFSK</sequence>
<comment type="function">
    <text evidence="5">DNA-binding transcriptional repressor involved in response to toxic agents such as ribonucleotide reductase inhibitor, hydroxyurea (HU).</text>
</comment>
<comment type="subcellular location">
    <subcellularLocation>
        <location evidence="4">Cytoplasm</location>
    </subcellularLocation>
    <subcellularLocation>
        <location evidence="4">Nucleus</location>
    </subcellularLocation>
</comment>
<comment type="induction">
    <text evidence="3">Down-regulated at low calcium levels.</text>
</comment>
<comment type="PTM">
    <text evidence="5">Phosphorylated during genotoxic stress. DNA damage induces phosphorylation by SNF1 or the MEC1 pathway and leads to its inactivation, which allows induction of damage response genes.</text>
</comment>
<comment type="similarity">
    <text evidence="6">Belongs to the creA/MIG C2H2-type zinc-finger protein family.</text>
</comment>
<dbReference type="EMBL" id="U18778">
    <property type="protein sequence ID" value="AAB64561.1"/>
    <property type="molecule type" value="Genomic_DNA"/>
</dbReference>
<dbReference type="EMBL" id="BK006939">
    <property type="protein sequence ID" value="DAA07681.1"/>
    <property type="molecule type" value="Genomic_DNA"/>
</dbReference>
<dbReference type="PIR" id="S50486">
    <property type="entry name" value="S50486"/>
</dbReference>
<dbReference type="RefSeq" id="NP_010945.1">
    <property type="nucleotide sequence ID" value="NM_001178919.1"/>
</dbReference>
<dbReference type="BioGRID" id="36763">
    <property type="interactions" value="37"/>
</dbReference>
<dbReference type="DIP" id="DIP-2545N"/>
<dbReference type="FunCoup" id="P39943">
    <property type="interactions" value="1648"/>
</dbReference>
<dbReference type="IntAct" id="P39943">
    <property type="interactions" value="4"/>
</dbReference>
<dbReference type="MINT" id="P39943"/>
<dbReference type="STRING" id="4932.YER028C"/>
<dbReference type="iPTMnet" id="P39943"/>
<dbReference type="PaxDb" id="4932-YER028C"/>
<dbReference type="PeptideAtlas" id="P39943"/>
<dbReference type="EnsemblFungi" id="YER028C_mRNA">
    <property type="protein sequence ID" value="YER028C"/>
    <property type="gene ID" value="YER028C"/>
</dbReference>
<dbReference type="GeneID" id="856750"/>
<dbReference type="KEGG" id="sce:YER028C"/>
<dbReference type="AGR" id="SGD:S000000830"/>
<dbReference type="SGD" id="S000000830">
    <property type="gene designation" value="MIG3"/>
</dbReference>
<dbReference type="VEuPathDB" id="FungiDB:YER028C"/>
<dbReference type="eggNOG" id="KOG1721">
    <property type="taxonomic scope" value="Eukaryota"/>
</dbReference>
<dbReference type="HOGENOM" id="CLU_058878_0_0_1"/>
<dbReference type="InParanoid" id="P39943"/>
<dbReference type="OMA" id="NTGDMEI"/>
<dbReference type="OrthoDB" id="654211at2759"/>
<dbReference type="BioCyc" id="YEAST:G3O-30209-MONOMER"/>
<dbReference type="BioGRID-ORCS" id="856750">
    <property type="hits" value="0 hits in 13 CRISPR screens"/>
</dbReference>
<dbReference type="PRO" id="PR:P39943"/>
<dbReference type="Proteomes" id="UP000002311">
    <property type="component" value="Chromosome V"/>
</dbReference>
<dbReference type="RNAct" id="P39943">
    <property type="molecule type" value="protein"/>
</dbReference>
<dbReference type="GO" id="GO:0000785">
    <property type="term" value="C:chromatin"/>
    <property type="evidence" value="ECO:0000314"/>
    <property type="project" value="SGD"/>
</dbReference>
<dbReference type="GO" id="GO:0005737">
    <property type="term" value="C:cytoplasm"/>
    <property type="evidence" value="ECO:0000318"/>
    <property type="project" value="GO_Central"/>
</dbReference>
<dbReference type="GO" id="GO:0005634">
    <property type="term" value="C:nucleus"/>
    <property type="evidence" value="ECO:0000318"/>
    <property type="project" value="GO_Central"/>
</dbReference>
<dbReference type="GO" id="GO:0001227">
    <property type="term" value="F:DNA-binding transcription repressor activity, RNA polymerase II-specific"/>
    <property type="evidence" value="ECO:0000314"/>
    <property type="project" value="SGD"/>
</dbReference>
<dbReference type="GO" id="GO:0000978">
    <property type="term" value="F:RNA polymerase II cis-regulatory region sequence-specific DNA binding"/>
    <property type="evidence" value="ECO:0000314"/>
    <property type="project" value="SGD"/>
</dbReference>
<dbReference type="GO" id="GO:0043565">
    <property type="term" value="F:sequence-specific DNA binding"/>
    <property type="evidence" value="ECO:0007005"/>
    <property type="project" value="SGD"/>
</dbReference>
<dbReference type="GO" id="GO:0008270">
    <property type="term" value="F:zinc ion binding"/>
    <property type="evidence" value="ECO:0007669"/>
    <property type="project" value="UniProtKB-KW"/>
</dbReference>
<dbReference type="GO" id="GO:0034644">
    <property type="term" value="P:cellular response to UV"/>
    <property type="evidence" value="ECO:0000316"/>
    <property type="project" value="SGD"/>
</dbReference>
<dbReference type="GO" id="GO:0006974">
    <property type="term" value="P:DNA damage response"/>
    <property type="evidence" value="ECO:0000315"/>
    <property type="project" value="SGD"/>
</dbReference>
<dbReference type="GO" id="GO:0000122">
    <property type="term" value="P:negative regulation of transcription by RNA polymerase II"/>
    <property type="evidence" value="ECO:0000315"/>
    <property type="project" value="SGD"/>
</dbReference>
<dbReference type="GO" id="GO:0006357">
    <property type="term" value="P:regulation of transcription by RNA polymerase II"/>
    <property type="evidence" value="ECO:0000315"/>
    <property type="project" value="SGD"/>
</dbReference>
<dbReference type="GO" id="GO:0045471">
    <property type="term" value="P:response to ethanol"/>
    <property type="evidence" value="ECO:0000315"/>
    <property type="project" value="SGD"/>
</dbReference>
<dbReference type="FunFam" id="3.30.160.60:FF:000072">
    <property type="entry name" value="zinc finger protein 143 isoform X1"/>
    <property type="match status" value="1"/>
</dbReference>
<dbReference type="Gene3D" id="3.30.160.60">
    <property type="entry name" value="Classic Zinc Finger"/>
    <property type="match status" value="2"/>
</dbReference>
<dbReference type="InterPro" id="IPR051007">
    <property type="entry name" value="creA/MIG_C2H2-ZnF"/>
</dbReference>
<dbReference type="InterPro" id="IPR036236">
    <property type="entry name" value="Znf_C2H2_sf"/>
</dbReference>
<dbReference type="InterPro" id="IPR013087">
    <property type="entry name" value="Znf_C2H2_type"/>
</dbReference>
<dbReference type="PANTHER" id="PTHR47428">
    <property type="entry name" value="REGULATORY PROTEIN MIG1-RELATED"/>
    <property type="match status" value="1"/>
</dbReference>
<dbReference type="PANTHER" id="PTHR47428:SF1">
    <property type="entry name" value="REGULATORY PROTEIN MIG1-RELATED"/>
    <property type="match status" value="1"/>
</dbReference>
<dbReference type="Pfam" id="PF00096">
    <property type="entry name" value="zf-C2H2"/>
    <property type="match status" value="1"/>
</dbReference>
<dbReference type="SMART" id="SM00355">
    <property type="entry name" value="ZnF_C2H2"/>
    <property type="match status" value="2"/>
</dbReference>
<dbReference type="SUPFAM" id="SSF57667">
    <property type="entry name" value="beta-beta-alpha zinc fingers"/>
    <property type="match status" value="1"/>
</dbReference>
<dbReference type="PROSITE" id="PS00028">
    <property type="entry name" value="ZINC_FINGER_C2H2_1"/>
    <property type="match status" value="2"/>
</dbReference>
<dbReference type="PROSITE" id="PS50157">
    <property type="entry name" value="ZINC_FINGER_C2H2_2"/>
    <property type="match status" value="2"/>
</dbReference>